<evidence type="ECO:0000255" key="1"/>
<evidence type="ECO:0000269" key="2">
    <source>
    </source>
</evidence>
<evidence type="ECO:0000303" key="3">
    <source>
    </source>
</evidence>
<evidence type="ECO:0000305" key="4"/>
<evidence type="ECO:0007744" key="5">
    <source>
    </source>
</evidence>
<organism>
    <name type="scientific">Mus musculus</name>
    <name type="common">Mouse</name>
    <dbReference type="NCBI Taxonomy" id="10090"/>
    <lineage>
        <taxon>Eukaryota</taxon>
        <taxon>Metazoa</taxon>
        <taxon>Chordata</taxon>
        <taxon>Craniata</taxon>
        <taxon>Vertebrata</taxon>
        <taxon>Euteleostomi</taxon>
        <taxon>Mammalia</taxon>
        <taxon>Eutheria</taxon>
        <taxon>Euarchontoglires</taxon>
        <taxon>Glires</taxon>
        <taxon>Rodentia</taxon>
        <taxon>Myomorpha</taxon>
        <taxon>Muroidea</taxon>
        <taxon>Muridae</taxon>
        <taxon>Murinae</taxon>
        <taxon>Mus</taxon>
        <taxon>Mus</taxon>
    </lineage>
</organism>
<feature type="chain" id="PRO_0000324585" description="DNA repair protein SWI5 homolog">
    <location>
        <begin position="1"/>
        <end position="89"/>
    </location>
</feature>
<feature type="coiled-coil region" evidence="1">
    <location>
        <begin position="10"/>
        <end position="38"/>
    </location>
</feature>
<feature type="splice variant" id="VSP_040899" description="In isoform 2." evidence="3">
    <original>M</original>
    <variation>MGSRGGTALTWGESEFSRLYHGGYRSPQRPFPM</variation>
    <location>
        <position position="1"/>
    </location>
</feature>
<feature type="modified residue" description="Phosphoserine" evidence="5">
    <location sequence="Q8K3D3-2">
        <position position="26"/>
    </location>
</feature>
<gene>
    <name type="primary">Swi5</name>
    <name type="synonym">Sae3</name>
</gene>
<reference key="1">
    <citation type="journal article" date="2010" name="PLoS Genet.">
        <title>Role for the mammalian Swi5-Sfr1 complex in DNA strand break repair through homologous recombination.</title>
        <authorList>
            <person name="Akamatsu Y."/>
            <person name="Jasin M."/>
        </authorList>
    </citation>
    <scope>NUCLEOTIDE SEQUENCE [MRNA] (ISOFORM 2)</scope>
    <scope>FUNCTION</scope>
    <scope>IDENTIFICATION IN THE SWI5-SFR1 COMPLEX</scope>
    <scope>SUBCELLULAR LOCATION</scope>
    <scope>INTERACTION WITH RAD51</scope>
</reference>
<reference key="2">
    <citation type="journal article" date="2005" name="Science">
        <title>The transcriptional landscape of the mammalian genome.</title>
        <authorList>
            <person name="Carninci P."/>
            <person name="Kasukawa T."/>
            <person name="Katayama S."/>
            <person name="Gough J."/>
            <person name="Frith M.C."/>
            <person name="Maeda N."/>
            <person name="Oyama R."/>
            <person name="Ravasi T."/>
            <person name="Lenhard B."/>
            <person name="Wells C."/>
            <person name="Kodzius R."/>
            <person name="Shimokawa K."/>
            <person name="Bajic V.B."/>
            <person name="Brenner S.E."/>
            <person name="Batalov S."/>
            <person name="Forrest A.R."/>
            <person name="Zavolan M."/>
            <person name="Davis M.J."/>
            <person name="Wilming L.G."/>
            <person name="Aidinis V."/>
            <person name="Allen J.E."/>
            <person name="Ambesi-Impiombato A."/>
            <person name="Apweiler R."/>
            <person name="Aturaliya R.N."/>
            <person name="Bailey T.L."/>
            <person name="Bansal M."/>
            <person name="Baxter L."/>
            <person name="Beisel K.W."/>
            <person name="Bersano T."/>
            <person name="Bono H."/>
            <person name="Chalk A.M."/>
            <person name="Chiu K.P."/>
            <person name="Choudhary V."/>
            <person name="Christoffels A."/>
            <person name="Clutterbuck D.R."/>
            <person name="Crowe M.L."/>
            <person name="Dalla E."/>
            <person name="Dalrymple B.P."/>
            <person name="de Bono B."/>
            <person name="Della Gatta G."/>
            <person name="di Bernardo D."/>
            <person name="Down T."/>
            <person name="Engstrom P."/>
            <person name="Fagiolini M."/>
            <person name="Faulkner G."/>
            <person name="Fletcher C.F."/>
            <person name="Fukushima T."/>
            <person name="Furuno M."/>
            <person name="Futaki S."/>
            <person name="Gariboldi M."/>
            <person name="Georgii-Hemming P."/>
            <person name="Gingeras T.R."/>
            <person name="Gojobori T."/>
            <person name="Green R.E."/>
            <person name="Gustincich S."/>
            <person name="Harbers M."/>
            <person name="Hayashi Y."/>
            <person name="Hensch T.K."/>
            <person name="Hirokawa N."/>
            <person name="Hill D."/>
            <person name="Huminiecki L."/>
            <person name="Iacono M."/>
            <person name="Ikeo K."/>
            <person name="Iwama A."/>
            <person name="Ishikawa T."/>
            <person name="Jakt M."/>
            <person name="Kanapin A."/>
            <person name="Katoh M."/>
            <person name="Kawasawa Y."/>
            <person name="Kelso J."/>
            <person name="Kitamura H."/>
            <person name="Kitano H."/>
            <person name="Kollias G."/>
            <person name="Krishnan S.P."/>
            <person name="Kruger A."/>
            <person name="Kummerfeld S.K."/>
            <person name="Kurochkin I.V."/>
            <person name="Lareau L.F."/>
            <person name="Lazarevic D."/>
            <person name="Lipovich L."/>
            <person name="Liu J."/>
            <person name="Liuni S."/>
            <person name="McWilliam S."/>
            <person name="Madan Babu M."/>
            <person name="Madera M."/>
            <person name="Marchionni L."/>
            <person name="Matsuda H."/>
            <person name="Matsuzawa S."/>
            <person name="Miki H."/>
            <person name="Mignone F."/>
            <person name="Miyake S."/>
            <person name="Morris K."/>
            <person name="Mottagui-Tabar S."/>
            <person name="Mulder N."/>
            <person name="Nakano N."/>
            <person name="Nakauchi H."/>
            <person name="Ng P."/>
            <person name="Nilsson R."/>
            <person name="Nishiguchi S."/>
            <person name="Nishikawa S."/>
            <person name="Nori F."/>
            <person name="Ohara O."/>
            <person name="Okazaki Y."/>
            <person name="Orlando V."/>
            <person name="Pang K.C."/>
            <person name="Pavan W.J."/>
            <person name="Pavesi G."/>
            <person name="Pesole G."/>
            <person name="Petrovsky N."/>
            <person name="Piazza S."/>
            <person name="Reed J."/>
            <person name="Reid J.F."/>
            <person name="Ring B.Z."/>
            <person name="Ringwald M."/>
            <person name="Rost B."/>
            <person name="Ruan Y."/>
            <person name="Salzberg S.L."/>
            <person name="Sandelin A."/>
            <person name="Schneider C."/>
            <person name="Schoenbach C."/>
            <person name="Sekiguchi K."/>
            <person name="Semple C.A."/>
            <person name="Seno S."/>
            <person name="Sessa L."/>
            <person name="Sheng Y."/>
            <person name="Shibata Y."/>
            <person name="Shimada H."/>
            <person name="Shimada K."/>
            <person name="Silva D."/>
            <person name="Sinclair B."/>
            <person name="Sperling S."/>
            <person name="Stupka E."/>
            <person name="Sugiura K."/>
            <person name="Sultana R."/>
            <person name="Takenaka Y."/>
            <person name="Taki K."/>
            <person name="Tammoja K."/>
            <person name="Tan S.L."/>
            <person name="Tang S."/>
            <person name="Taylor M.S."/>
            <person name="Tegner J."/>
            <person name="Teichmann S.A."/>
            <person name="Ueda H.R."/>
            <person name="van Nimwegen E."/>
            <person name="Verardo R."/>
            <person name="Wei C.L."/>
            <person name="Yagi K."/>
            <person name="Yamanishi H."/>
            <person name="Zabarovsky E."/>
            <person name="Zhu S."/>
            <person name="Zimmer A."/>
            <person name="Hide W."/>
            <person name="Bult C."/>
            <person name="Grimmond S.M."/>
            <person name="Teasdale R.D."/>
            <person name="Liu E.T."/>
            <person name="Brusic V."/>
            <person name="Quackenbush J."/>
            <person name="Wahlestedt C."/>
            <person name="Mattick J.S."/>
            <person name="Hume D.A."/>
            <person name="Kai C."/>
            <person name="Sasaki D."/>
            <person name="Tomaru Y."/>
            <person name="Fukuda S."/>
            <person name="Kanamori-Katayama M."/>
            <person name="Suzuki M."/>
            <person name="Aoki J."/>
            <person name="Arakawa T."/>
            <person name="Iida J."/>
            <person name="Imamura K."/>
            <person name="Itoh M."/>
            <person name="Kato T."/>
            <person name="Kawaji H."/>
            <person name="Kawagashira N."/>
            <person name="Kawashima T."/>
            <person name="Kojima M."/>
            <person name="Kondo S."/>
            <person name="Konno H."/>
            <person name="Nakano K."/>
            <person name="Ninomiya N."/>
            <person name="Nishio T."/>
            <person name="Okada M."/>
            <person name="Plessy C."/>
            <person name="Shibata K."/>
            <person name="Shiraki T."/>
            <person name="Suzuki S."/>
            <person name="Tagami M."/>
            <person name="Waki K."/>
            <person name="Watahiki A."/>
            <person name="Okamura-Oho Y."/>
            <person name="Suzuki H."/>
            <person name="Kawai J."/>
            <person name="Hayashizaki Y."/>
        </authorList>
    </citation>
    <scope>NUCLEOTIDE SEQUENCE [LARGE SCALE MRNA] (ISOFORM 1)</scope>
    <source>
        <strain>C57BL/6J</strain>
        <tissue>Hippocampus</tissue>
    </source>
</reference>
<reference key="3">
    <citation type="journal article" date="2009" name="PLoS Biol.">
        <title>Lineage-specific biology revealed by a finished genome assembly of the mouse.</title>
        <authorList>
            <person name="Church D.M."/>
            <person name="Goodstadt L."/>
            <person name="Hillier L.W."/>
            <person name="Zody M.C."/>
            <person name="Goldstein S."/>
            <person name="She X."/>
            <person name="Bult C.J."/>
            <person name="Agarwala R."/>
            <person name="Cherry J.L."/>
            <person name="DiCuccio M."/>
            <person name="Hlavina W."/>
            <person name="Kapustin Y."/>
            <person name="Meric P."/>
            <person name="Maglott D."/>
            <person name="Birtle Z."/>
            <person name="Marques A.C."/>
            <person name="Graves T."/>
            <person name="Zhou S."/>
            <person name="Teague B."/>
            <person name="Potamousis K."/>
            <person name="Churas C."/>
            <person name="Place M."/>
            <person name="Herschleb J."/>
            <person name="Runnheim R."/>
            <person name="Forrest D."/>
            <person name="Amos-Landgraf J."/>
            <person name="Schwartz D.C."/>
            <person name="Cheng Z."/>
            <person name="Lindblad-Toh K."/>
            <person name="Eichler E.E."/>
            <person name="Ponting C.P."/>
        </authorList>
    </citation>
    <scope>NUCLEOTIDE SEQUENCE [LARGE SCALE GENOMIC DNA]</scope>
    <source>
        <strain>C57BL/6J</strain>
    </source>
</reference>
<reference key="4">
    <citation type="submission" date="2005-07" db="EMBL/GenBank/DDBJ databases">
        <authorList>
            <person name="Mural R.J."/>
            <person name="Adams M.D."/>
            <person name="Myers E.W."/>
            <person name="Smith H.O."/>
            <person name="Venter J.C."/>
        </authorList>
    </citation>
    <scope>NUCLEOTIDE SEQUENCE [LARGE SCALE GENOMIC DNA]</scope>
</reference>
<reference key="5">
    <citation type="journal article" date="2004" name="Genome Res.">
        <title>The status, quality, and expansion of the NIH full-length cDNA project: the Mammalian Gene Collection (MGC).</title>
        <authorList>
            <consortium name="The MGC Project Team"/>
        </authorList>
    </citation>
    <scope>NUCLEOTIDE SEQUENCE [LARGE SCALE MRNA] (ISOFORM 1)</scope>
    <source>
        <strain>Czech II</strain>
        <tissue>Mammary tumor</tissue>
    </source>
</reference>
<reference key="6">
    <citation type="journal article" date="2010" name="Cell">
        <title>A tissue-specific atlas of mouse protein phosphorylation and expression.</title>
        <authorList>
            <person name="Huttlin E.L."/>
            <person name="Jedrychowski M.P."/>
            <person name="Elias J.E."/>
            <person name="Goswami T."/>
            <person name="Rad R."/>
            <person name="Beausoleil S.A."/>
            <person name="Villen J."/>
            <person name="Haas W."/>
            <person name="Sowa M.E."/>
            <person name="Gygi S.P."/>
        </authorList>
    </citation>
    <scope>PHOSPHORYLATION [LARGE SCALE ANALYSIS] AT SER-26 (ISOFORM 2)</scope>
    <scope>IDENTIFICATION BY MASS SPECTROMETRY [LARGE SCALE ANALYSIS]</scope>
    <source>
        <tissue>Brain</tissue>
        <tissue>Kidney</tissue>
        <tissue>Lung</tissue>
        <tissue>Pancreas</tissue>
        <tissue>Spleen</tissue>
        <tissue>Testis</tissue>
    </source>
</reference>
<keyword id="KW-0025">Alternative splicing</keyword>
<keyword id="KW-0175">Coiled coil</keyword>
<keyword id="KW-0227">DNA damage</keyword>
<keyword id="KW-0234">DNA repair</keyword>
<keyword id="KW-0539">Nucleus</keyword>
<keyword id="KW-0597">Phosphoprotein</keyword>
<keyword id="KW-1185">Reference proteome</keyword>
<dbReference type="EMBL" id="AB597964">
    <property type="protein sequence ID" value="BAJ25750.1"/>
    <property type="molecule type" value="mRNA"/>
</dbReference>
<dbReference type="EMBL" id="AK013517">
    <property type="protein sequence ID" value="BAC25409.1"/>
    <property type="molecule type" value="mRNA"/>
</dbReference>
<dbReference type="EMBL" id="AK166608">
    <property type="protein sequence ID" value="BAE38890.1"/>
    <property type="molecule type" value="mRNA"/>
</dbReference>
<dbReference type="EMBL" id="AL808027">
    <property type="status" value="NOT_ANNOTATED_CDS"/>
    <property type="molecule type" value="Genomic_DNA"/>
</dbReference>
<dbReference type="EMBL" id="CH466542">
    <property type="protein sequence ID" value="EDL08533.1"/>
    <property type="molecule type" value="Genomic_DNA"/>
</dbReference>
<dbReference type="EMBL" id="BC021748">
    <property type="protein sequence ID" value="AAH21748.1"/>
    <property type="molecule type" value="mRNA"/>
</dbReference>
<dbReference type="CCDS" id="CCDS71026.1">
    <molecule id="Q8K3D3-2"/>
</dbReference>
<dbReference type="RefSeq" id="NP_001277481.1">
    <molecule id="Q8K3D3-2"/>
    <property type="nucleotide sequence ID" value="NM_001290552.1"/>
</dbReference>
<dbReference type="RefSeq" id="NP_780399.1">
    <property type="nucleotide sequence ID" value="NM_175190.5"/>
</dbReference>
<dbReference type="SMR" id="Q8K3D3"/>
<dbReference type="BioGRID" id="215652">
    <property type="interactions" value="2"/>
</dbReference>
<dbReference type="FunCoup" id="Q8K3D3">
    <property type="interactions" value="74"/>
</dbReference>
<dbReference type="STRING" id="10090.ENSMUSP00000109027"/>
<dbReference type="iPTMnet" id="Q8K3D3"/>
<dbReference type="PhosphoSitePlus" id="Q8K3D3"/>
<dbReference type="PaxDb" id="10090-ENSMUSP00000057512"/>
<dbReference type="PeptideAtlas" id="Q8K3D3"/>
<dbReference type="ProteomicsDB" id="254731">
    <molecule id="Q8K3D3-1"/>
</dbReference>
<dbReference type="ProteomicsDB" id="254732">
    <molecule id="Q8K3D3-2"/>
</dbReference>
<dbReference type="Pumba" id="Q8K3D3"/>
<dbReference type="Antibodypedia" id="58850">
    <property type="antibodies" value="39 antibodies from 11 providers"/>
</dbReference>
<dbReference type="DNASU" id="72931"/>
<dbReference type="Ensembl" id="ENSMUST00000113395.8">
    <molecule id="Q8K3D3-1"/>
    <property type="protein sequence ID" value="ENSMUSP00000109022.2"/>
    <property type="gene ID" value="ENSMUSG00000044627.12"/>
</dbReference>
<dbReference type="Ensembl" id="ENSMUST00000113400.3">
    <molecule id="Q8K3D3-2"/>
    <property type="protein sequence ID" value="ENSMUSP00000109027.3"/>
    <property type="gene ID" value="ENSMUSG00000044627.12"/>
</dbReference>
<dbReference type="Ensembl" id="ENSMUST00000183946.8">
    <molecule id="Q8K3D3-1"/>
    <property type="protein sequence ID" value="ENSMUSP00000139299.2"/>
    <property type="gene ID" value="ENSMUSG00000044627.12"/>
</dbReference>
<dbReference type="GeneID" id="72931"/>
<dbReference type="KEGG" id="mmu:72931"/>
<dbReference type="UCSC" id="uc008jet.3">
    <molecule id="Q8K3D3-1"/>
    <property type="organism name" value="mouse"/>
</dbReference>
<dbReference type="UCSC" id="uc012bts.2">
    <molecule id="Q8K3D3-2"/>
    <property type="organism name" value="mouse"/>
</dbReference>
<dbReference type="AGR" id="MGI:1920181"/>
<dbReference type="CTD" id="375757"/>
<dbReference type="MGI" id="MGI:1920181">
    <property type="gene designation" value="Swi5"/>
</dbReference>
<dbReference type="VEuPathDB" id="HostDB:ENSMUSG00000044627"/>
<dbReference type="eggNOG" id="ENOG502S8Z3">
    <property type="taxonomic scope" value="Eukaryota"/>
</dbReference>
<dbReference type="GeneTree" id="ENSGT00390000009349"/>
<dbReference type="HOGENOM" id="CLU_106110_1_1_1"/>
<dbReference type="InParanoid" id="Q8K3D3"/>
<dbReference type="OMA" id="VSSNCHA"/>
<dbReference type="OrthoDB" id="77158at9989"/>
<dbReference type="PhylomeDB" id="Q8K3D3"/>
<dbReference type="TreeFam" id="TF336078"/>
<dbReference type="BioGRID-ORCS" id="72931">
    <property type="hits" value="20 hits in 113 CRISPR screens"/>
</dbReference>
<dbReference type="ChiTaRS" id="Swi5">
    <property type="organism name" value="mouse"/>
</dbReference>
<dbReference type="PRO" id="PR:Q8K3D3"/>
<dbReference type="Proteomes" id="UP000000589">
    <property type="component" value="Chromosome 2"/>
</dbReference>
<dbReference type="RNAct" id="Q8K3D3">
    <property type="molecule type" value="protein"/>
</dbReference>
<dbReference type="Bgee" id="ENSMUSG00000044627">
    <property type="expression patterns" value="Expressed in secondary palatal shelf and 268 other cell types or tissues"/>
</dbReference>
<dbReference type="ExpressionAtlas" id="Q8K3D3">
    <property type="expression patterns" value="baseline and differential"/>
</dbReference>
<dbReference type="GO" id="GO:0005634">
    <property type="term" value="C:nucleus"/>
    <property type="evidence" value="ECO:0000314"/>
    <property type="project" value="UniProtKB"/>
</dbReference>
<dbReference type="GO" id="GO:0032798">
    <property type="term" value="C:Swi5-Sfr1 complex"/>
    <property type="evidence" value="ECO:0000314"/>
    <property type="project" value="UniProtKB"/>
</dbReference>
<dbReference type="GO" id="GO:0071479">
    <property type="term" value="P:cellular response to ionizing radiation"/>
    <property type="evidence" value="ECO:0000250"/>
    <property type="project" value="UniProtKB"/>
</dbReference>
<dbReference type="GO" id="GO:0000724">
    <property type="term" value="P:double-strand break repair via homologous recombination"/>
    <property type="evidence" value="ECO:0000315"/>
    <property type="project" value="UniProtKB"/>
</dbReference>
<dbReference type="FunFam" id="1.20.5.170:FF:000056">
    <property type="entry name" value="DNA repair protein SWI5 homolog"/>
    <property type="match status" value="1"/>
</dbReference>
<dbReference type="Gene3D" id="1.20.5.170">
    <property type="match status" value="1"/>
</dbReference>
<dbReference type="InterPro" id="IPR010760">
    <property type="entry name" value="DNA-repair_Swi5"/>
</dbReference>
<dbReference type="PANTHER" id="PTHR28529">
    <property type="entry name" value="DNA REPAIR PROTEIN SWI5 HOMOLOG"/>
    <property type="match status" value="1"/>
</dbReference>
<dbReference type="PANTHER" id="PTHR28529:SF2">
    <property type="entry name" value="DNA REPAIR PROTEIN SWI5 HOMOLOG"/>
    <property type="match status" value="1"/>
</dbReference>
<dbReference type="Pfam" id="PF07061">
    <property type="entry name" value="Swi5"/>
    <property type="match status" value="1"/>
</dbReference>
<name>SWI5_MOUSE</name>
<proteinExistence type="evidence at protein level"/>
<accession>Q8K3D3</accession>
<accession>A2AN41</accession>
<comment type="function">
    <text evidence="2">Component of the SWI5-SFR1 complex, a complex required for double-strand break repair via homologous recombination.</text>
</comment>
<comment type="subunit">
    <text evidence="2">Component of the SWI5-SFR1 complex. Interacts with RAD51.</text>
</comment>
<comment type="subcellular location">
    <subcellularLocation>
        <location evidence="2">Nucleus</location>
    </subcellularLocation>
</comment>
<comment type="alternative products">
    <event type="alternative splicing"/>
    <isoform>
        <id>Q8K3D3-1</id>
        <name>1</name>
        <sequence type="displayed"/>
    </isoform>
    <isoform>
        <id>Q8K3D3-2</id>
        <name>2</name>
        <sequence type="described" ref="VSP_040899"/>
    </isoform>
</comment>
<comment type="similarity">
    <text evidence="4">Belongs to the SWI5/SAE3 family.</text>
</comment>
<sequence>MIDENNDVSEEALSSDIKKLKEKHDMLDKEISQLIAEGYRVIELEKHISLLHEYNDIKDVSQMLLGKLAVTRGVTTKELYPDFDLNLND</sequence>
<protein>
    <recommendedName>
        <fullName>DNA repair protein SWI5 homolog</fullName>
    </recommendedName>
    <alternativeName>
        <fullName>Protein SAE3 homolog</fullName>
    </alternativeName>
</protein>